<proteinExistence type="inferred from homology"/>
<evidence type="ECO:0000305" key="1"/>
<gene>
    <name type="primary">htxH</name>
</gene>
<organism>
    <name type="scientific">Stutzerimonas stutzeri</name>
    <name type="common">Pseudomonas stutzeri</name>
    <dbReference type="NCBI Taxonomy" id="316"/>
    <lineage>
        <taxon>Bacteria</taxon>
        <taxon>Pseudomonadati</taxon>
        <taxon>Pseudomonadota</taxon>
        <taxon>Gammaproteobacteria</taxon>
        <taxon>Pseudomonadales</taxon>
        <taxon>Pseudomonadaceae</taxon>
        <taxon>Stutzerimonas</taxon>
    </lineage>
</organism>
<dbReference type="EMBL" id="AF061267">
    <property type="protein sequence ID" value="AAC71718.1"/>
    <property type="molecule type" value="Genomic_DNA"/>
</dbReference>
<dbReference type="SMR" id="O69067"/>
<dbReference type="GO" id="GO:0019634">
    <property type="term" value="P:organic phosphonate metabolic process"/>
    <property type="evidence" value="ECO:0007669"/>
    <property type="project" value="InterPro"/>
</dbReference>
<dbReference type="InterPro" id="IPR008773">
    <property type="entry name" value="PhnI"/>
</dbReference>
<dbReference type="Pfam" id="PF05861">
    <property type="entry name" value="PhnI"/>
    <property type="match status" value="1"/>
</dbReference>
<dbReference type="PIRSF" id="PIRSF007313">
    <property type="entry name" value="PhnI"/>
    <property type="match status" value="1"/>
</dbReference>
<accession>O69067</accession>
<sequence length="373" mass="40326">MGYVAIKGGGRAIAGAEAAVEALRCAEGPAGTPLTLSAIEQQLRLLTSRVVSEGGLYHPRLAALAIKQMQGDTLEAAFALRAYRSTKPRLMDVPVQDTSRMRLIRRISSAFKDIPGGQMLGPTTDYALRLMRLDLANESPEDFRAVSRRFLDSVADTDLPDSFPKVVDALRDEGLLPPLTRRAHAAFDITRDPLVFPVPRSAALATMARAETGSLLAIAYSNMRGYGDVHPTIAELRVGYVPVMLPHPVTGEPIEAGEVLMTECEVVAMFEGDATDGPPTFTLGYGACFGHNEVKAIAMAILDRALQKGMRDGPSNPSEDPEFVLLHVDGVDSMGFASHYKMPHYVTFQSDMDRLRTTQDKATAQPTQEGAPS</sequence>
<name>HTXH_STUST</name>
<feature type="chain" id="PRO_0000084089" description="Putative C-P lyase subunit protein HtxH">
    <location>
        <begin position="1"/>
        <end position="373"/>
    </location>
</feature>
<comment type="function">
    <text>Belongs to an operon involved in hypophosphite oxidation. Exact function not known.</text>
</comment>
<comment type="similarity">
    <text evidence="1">Belongs to the PhnI family.</text>
</comment>
<reference key="1">
    <citation type="journal article" date="1998" name="J. Bacteriol.">
        <title>Molecular genetic analysis of phosphite and hypophosphite oxidation by Pseudomonas stutzeri WM88.</title>
        <authorList>
            <person name="Metcalf W.W."/>
            <person name="Wolfe R.S."/>
        </authorList>
    </citation>
    <scope>NUCLEOTIDE SEQUENCE [GENOMIC DNA]</scope>
    <source>
        <strain>WM88</strain>
    </source>
</reference>
<protein>
    <recommendedName>
        <fullName>Putative C-P lyase subunit protein HtxH</fullName>
    </recommendedName>
</protein>